<accession>Q9LRE5</accession>
<accession>Q10SB2</accession>
<accession>Q8H890</accession>
<accession>Q9SNL2</accession>
<organism>
    <name type="scientific">Oryza sativa subsp. japonica</name>
    <name type="common">Rice</name>
    <dbReference type="NCBI Taxonomy" id="39947"/>
    <lineage>
        <taxon>Eukaryota</taxon>
        <taxon>Viridiplantae</taxon>
        <taxon>Streptophyta</taxon>
        <taxon>Embryophyta</taxon>
        <taxon>Tracheophyta</taxon>
        <taxon>Spermatophyta</taxon>
        <taxon>Magnoliopsida</taxon>
        <taxon>Liliopsida</taxon>
        <taxon>Poales</taxon>
        <taxon>Poaceae</taxon>
        <taxon>BOP clade</taxon>
        <taxon>Oryzoideae</taxon>
        <taxon>Oryzeae</taxon>
        <taxon>Oryzinae</taxon>
        <taxon>Oryza</taxon>
        <taxon>Oryza sativa</taxon>
    </lineage>
</organism>
<keyword id="KW-0235">DNA replication</keyword>
<keyword id="KW-0239">DNA-directed DNA polymerase</keyword>
<keyword id="KW-0548">Nucleotidyltransferase</keyword>
<keyword id="KW-0539">Nucleus</keyword>
<keyword id="KW-1185">Reference proteome</keyword>
<keyword id="KW-0808">Transferase</keyword>
<evidence type="ECO:0000250" key="1"/>
<evidence type="ECO:0000305" key="2"/>
<evidence type="ECO:0000312" key="3">
    <source>
        <dbReference type="EMBL" id="EEE58261.1"/>
    </source>
</evidence>
<protein>
    <recommendedName>
        <fullName>DNA polymerase delta small subunit</fullName>
        <ecNumber>2.7.7.7</ecNumber>
    </recommendedName>
</protein>
<dbReference type="EC" id="2.7.7.7"/>
<dbReference type="EMBL" id="AB037900">
    <property type="protein sequence ID" value="BAA99574.1"/>
    <property type="molecule type" value="mRNA"/>
</dbReference>
<dbReference type="EMBL" id="AC099739">
    <property type="protein sequence ID" value="AAN17387.1"/>
    <property type="status" value="ALT_SEQ"/>
    <property type="molecule type" value="Genomic_DNA"/>
</dbReference>
<dbReference type="EMBL" id="AP000615">
    <property type="protein sequence ID" value="BAA85393.1"/>
    <property type="status" value="ALT_SEQ"/>
    <property type="molecule type" value="Genomic_DNA"/>
</dbReference>
<dbReference type="EMBL" id="DP000009">
    <property type="protein sequence ID" value="ABF93778.1"/>
    <property type="molecule type" value="Genomic_DNA"/>
</dbReference>
<dbReference type="EMBL" id="AP008209">
    <property type="protein sequence ID" value="BAF10755.1"/>
    <property type="molecule type" value="Genomic_DNA"/>
</dbReference>
<dbReference type="EMBL" id="AP014959">
    <property type="protein sequence ID" value="BAS82105.1"/>
    <property type="molecule type" value="Genomic_DNA"/>
</dbReference>
<dbReference type="EMBL" id="CM000140">
    <property type="protein sequence ID" value="EEE58261.1"/>
    <property type="molecule type" value="Genomic_DNA"/>
</dbReference>
<dbReference type="EMBL" id="AK067991">
    <property type="protein sequence ID" value="BAG90699.1"/>
    <property type="molecule type" value="mRNA"/>
</dbReference>
<dbReference type="RefSeq" id="XP_015629014.1">
    <property type="nucleotide sequence ID" value="XM_015773528.1"/>
</dbReference>
<dbReference type="SMR" id="Q9LRE5"/>
<dbReference type="FunCoup" id="Q9LRE5">
    <property type="interactions" value="2492"/>
</dbReference>
<dbReference type="STRING" id="39947.Q9LRE5"/>
<dbReference type="PaxDb" id="39947-Q9LRE5"/>
<dbReference type="EnsemblPlants" id="Os03t0128500-01">
    <property type="protein sequence ID" value="Os03t0128500-01"/>
    <property type="gene ID" value="Os03g0128500"/>
</dbReference>
<dbReference type="Gramene" id="Os03t0128500-01">
    <property type="protein sequence ID" value="Os03t0128500-01"/>
    <property type="gene ID" value="Os03g0128500"/>
</dbReference>
<dbReference type="KEGG" id="dosa:Os03g0128500"/>
<dbReference type="eggNOG" id="KOG2732">
    <property type="taxonomic scope" value="Eukaryota"/>
</dbReference>
<dbReference type="HOGENOM" id="CLU_021763_0_0_1"/>
<dbReference type="InParanoid" id="Q9LRE5"/>
<dbReference type="OMA" id="HCILIGT"/>
<dbReference type="OrthoDB" id="3763at2759"/>
<dbReference type="PlantReactome" id="R-OSA-9675782">
    <property type="pathway name" value="Maturation"/>
</dbReference>
<dbReference type="PlantReactome" id="R-OSA-9675815">
    <property type="pathway name" value="Leading strand synthesis"/>
</dbReference>
<dbReference type="PlantReactome" id="R-OSA-9675885">
    <property type="pathway name" value="Lagging strand synthesis"/>
</dbReference>
<dbReference type="Proteomes" id="UP000000763">
    <property type="component" value="Chromosome 3"/>
</dbReference>
<dbReference type="Proteomes" id="UP000007752">
    <property type="component" value="Chromosome 3"/>
</dbReference>
<dbReference type="Proteomes" id="UP000059680">
    <property type="component" value="Chromosome 3"/>
</dbReference>
<dbReference type="GO" id="GO:0043625">
    <property type="term" value="C:delta DNA polymerase complex"/>
    <property type="evidence" value="ECO:0000318"/>
    <property type="project" value="GO_Central"/>
</dbReference>
<dbReference type="GO" id="GO:0003677">
    <property type="term" value="F:DNA binding"/>
    <property type="evidence" value="ECO:0007669"/>
    <property type="project" value="InterPro"/>
</dbReference>
<dbReference type="GO" id="GO:0003887">
    <property type="term" value="F:DNA-directed DNA polymerase activity"/>
    <property type="evidence" value="ECO:0007669"/>
    <property type="project" value="UniProtKB-KW"/>
</dbReference>
<dbReference type="GO" id="GO:0006271">
    <property type="term" value="P:DNA strand elongation involved in DNA replication"/>
    <property type="evidence" value="ECO:0000318"/>
    <property type="project" value="GO_Central"/>
</dbReference>
<dbReference type="CDD" id="cd07387">
    <property type="entry name" value="MPP_PolD2_C"/>
    <property type="match status" value="1"/>
</dbReference>
<dbReference type="FunFam" id="3.60.21.50:FF:000002">
    <property type="entry name" value="DNA polymerase delta small subunit"/>
    <property type="match status" value="1"/>
</dbReference>
<dbReference type="FunFam" id="2.40.50.430:FF:000001">
    <property type="entry name" value="DNA polymerase delta subunit 2"/>
    <property type="match status" value="1"/>
</dbReference>
<dbReference type="Gene3D" id="2.40.50.430">
    <property type="match status" value="1"/>
</dbReference>
<dbReference type="Gene3D" id="3.60.21.50">
    <property type="match status" value="1"/>
</dbReference>
<dbReference type="InterPro" id="IPR007185">
    <property type="entry name" value="DNA_pol_a/d/e_bsu"/>
</dbReference>
<dbReference type="InterPro" id="IPR040663">
    <property type="entry name" value="DNA_pol_D_N"/>
</dbReference>
<dbReference type="InterPro" id="IPR024826">
    <property type="entry name" value="DNA_pol_delta/II_ssu"/>
</dbReference>
<dbReference type="InterPro" id="IPR041863">
    <property type="entry name" value="PolD2_C"/>
</dbReference>
<dbReference type="PANTHER" id="PTHR10416">
    <property type="entry name" value="DNA POLYMERASE DELTA SUBUNIT 2"/>
    <property type="match status" value="1"/>
</dbReference>
<dbReference type="PANTHER" id="PTHR10416:SF0">
    <property type="entry name" value="DNA POLYMERASE DELTA SUBUNIT 2"/>
    <property type="match status" value="1"/>
</dbReference>
<dbReference type="Pfam" id="PF18018">
    <property type="entry name" value="DNA_pol_D_N"/>
    <property type="match status" value="1"/>
</dbReference>
<dbReference type="Pfam" id="PF04042">
    <property type="entry name" value="DNA_pol_E_B"/>
    <property type="match status" value="1"/>
</dbReference>
<feature type="chain" id="PRO_0000096172" description="DNA polymerase delta small subunit">
    <location>
        <begin position="1"/>
        <end position="429"/>
    </location>
</feature>
<proteinExistence type="evidence at transcript level"/>
<sequence length="429" mass="48001">MERKQAEYSNLDERYAIQGEKYQGQQYSHIYFTRLHHMRNLLHALVPSWKPHLPVTTVLGLEEGKDCIIVGTLYKHMKLKPSILDEYSKERSAIPLVKPHNFMHPDDHLILEDESGRVTLAGAIPPAAYVTGVVIALHGKETSAGNFLVEDILEAGIPPQITLPSINEDKYVVFVSGLSIGSEKFNPLQFQLLIDHITGHLGDENEQSIASNIVRVVVAGNSVHISPRFFNGQAVASKDQSRIAEPIKELDIMLTQLVASLPVDMMPGSNDPANFSLPQQPLHRCLFAGAATYNTFSSCSNPHQFELDSVRFIGTSGQNIDDLYKYSDAKDKLEFVERTLRWRHLAPTAPNSLGCYPYTDKDPFLVESCPHVYFVGNQDKYETQLLQGLEKQKVRLICIPRFCDSGVAVMLNLRNLECSTLSFSTSFDA</sequence>
<comment type="function">
    <text>The function of the small subunit is not yet clear.</text>
</comment>
<comment type="catalytic activity">
    <reaction>
        <text>DNA(n) + a 2'-deoxyribonucleoside 5'-triphosphate = DNA(n+1) + diphosphate</text>
        <dbReference type="Rhea" id="RHEA:22508"/>
        <dbReference type="Rhea" id="RHEA-COMP:17339"/>
        <dbReference type="Rhea" id="RHEA-COMP:17340"/>
        <dbReference type="ChEBI" id="CHEBI:33019"/>
        <dbReference type="ChEBI" id="CHEBI:61560"/>
        <dbReference type="ChEBI" id="CHEBI:173112"/>
        <dbReference type="EC" id="2.7.7.7"/>
    </reaction>
</comment>
<comment type="subunit">
    <text evidence="1">Heterodimer with subunits of 125 kDa and 50 kDa.</text>
</comment>
<comment type="subcellular location">
    <subcellularLocation>
        <location evidence="1">Nucleus</location>
    </subcellularLocation>
</comment>
<comment type="similarity">
    <text evidence="2">Belongs to the DNA polymerase delta/II small subunit family.</text>
</comment>
<comment type="sequence caution" evidence="2">
    <conflict type="erroneous gene model prediction">
        <sequence resource="EMBL-CDS" id="AAN17387"/>
    </conflict>
</comment>
<comment type="sequence caution" evidence="2">
    <conflict type="erroneous gene model prediction">
        <sequence resource="EMBL-CDS" id="BAA85393"/>
    </conflict>
</comment>
<name>DPOD2_ORYSJ</name>
<reference key="1">
    <citation type="journal article" date="2002" name="Gene">
        <title>Characterization of DNA polymerase delta from a higher plant, rice (Oryza sativa L.).</title>
        <authorList>
            <person name="Uchiyama Y."/>
            <person name="Hatanaka M."/>
            <person name="Kimura S."/>
            <person name="Ishibashi T."/>
            <person name="Ueda T."/>
            <person name="Sakakibara Y."/>
            <person name="Matsumoto T."/>
            <person name="Furukawa T."/>
            <person name="Hashimoto J."/>
            <person name="Sakaguchi K."/>
        </authorList>
    </citation>
    <scope>NUCLEOTIDE SEQUENCE [MRNA]</scope>
    <source>
        <strain>cv. Nipponbare</strain>
    </source>
</reference>
<reference key="2">
    <citation type="journal article" date="2005" name="Genome Res.">
        <title>Sequence, annotation, and analysis of synteny between rice chromosome 3 and diverged grass species.</title>
        <authorList>
            <consortium name="The rice chromosome 3 sequencing consortium"/>
            <person name="Buell C.R."/>
            <person name="Yuan Q."/>
            <person name="Ouyang S."/>
            <person name="Liu J."/>
            <person name="Zhu W."/>
            <person name="Wang A."/>
            <person name="Maiti R."/>
            <person name="Haas B."/>
            <person name="Wortman J."/>
            <person name="Pertea M."/>
            <person name="Jones K.M."/>
            <person name="Kim M."/>
            <person name="Overton L."/>
            <person name="Tsitrin T."/>
            <person name="Fadrosh D."/>
            <person name="Bera J."/>
            <person name="Weaver B."/>
            <person name="Jin S."/>
            <person name="Johri S."/>
            <person name="Reardon M."/>
            <person name="Webb K."/>
            <person name="Hill J."/>
            <person name="Moffat K."/>
            <person name="Tallon L."/>
            <person name="Van Aken S."/>
            <person name="Lewis M."/>
            <person name="Utterback T."/>
            <person name="Feldblyum T."/>
            <person name="Zismann V."/>
            <person name="Iobst S."/>
            <person name="Hsiao J."/>
            <person name="de Vazeille A.R."/>
            <person name="Salzberg S.L."/>
            <person name="White O."/>
            <person name="Fraser C.M."/>
            <person name="Yu Y."/>
            <person name="Kim H."/>
            <person name="Rambo T."/>
            <person name="Currie J."/>
            <person name="Collura K."/>
            <person name="Kernodle-Thompson S."/>
            <person name="Wei F."/>
            <person name="Kudrna K."/>
            <person name="Ammiraju J.S.S."/>
            <person name="Luo M."/>
            <person name="Goicoechea J.L."/>
            <person name="Wing R.A."/>
            <person name="Henry D."/>
            <person name="Oates R."/>
            <person name="Palmer M."/>
            <person name="Pries G."/>
            <person name="Saski C."/>
            <person name="Simmons J."/>
            <person name="Soderlund C."/>
            <person name="Nelson W."/>
            <person name="de la Bastide M."/>
            <person name="Spiegel L."/>
            <person name="Nascimento L."/>
            <person name="Huang E."/>
            <person name="Preston R."/>
            <person name="Zutavern T."/>
            <person name="Palmer L."/>
            <person name="O'Shaughnessy A."/>
            <person name="Dike S."/>
            <person name="McCombie W.R."/>
            <person name="Minx P."/>
            <person name="Cordum H."/>
            <person name="Wilson R."/>
            <person name="Jin W."/>
            <person name="Lee H.R."/>
            <person name="Jiang J."/>
            <person name="Jackson S."/>
        </authorList>
    </citation>
    <scope>NUCLEOTIDE SEQUENCE [LARGE SCALE GENOMIC DNA]</scope>
    <source>
        <strain>cv. Nipponbare</strain>
    </source>
</reference>
<reference key="3">
    <citation type="journal article" date="2005" name="Nature">
        <title>The map-based sequence of the rice genome.</title>
        <authorList>
            <consortium name="International rice genome sequencing project (IRGSP)"/>
        </authorList>
    </citation>
    <scope>NUCLEOTIDE SEQUENCE [LARGE SCALE GENOMIC DNA]</scope>
    <source>
        <strain>cv. Nipponbare</strain>
    </source>
</reference>
<reference key="4">
    <citation type="journal article" date="2008" name="Nucleic Acids Res.">
        <title>The rice annotation project database (RAP-DB): 2008 update.</title>
        <authorList>
            <consortium name="The rice annotation project (RAP)"/>
        </authorList>
    </citation>
    <scope>GENOME REANNOTATION</scope>
    <source>
        <strain>cv. Nipponbare</strain>
    </source>
</reference>
<reference key="5">
    <citation type="journal article" date="2013" name="Rice">
        <title>Improvement of the Oryza sativa Nipponbare reference genome using next generation sequence and optical map data.</title>
        <authorList>
            <person name="Kawahara Y."/>
            <person name="de la Bastide M."/>
            <person name="Hamilton J.P."/>
            <person name="Kanamori H."/>
            <person name="McCombie W.R."/>
            <person name="Ouyang S."/>
            <person name="Schwartz D.C."/>
            <person name="Tanaka T."/>
            <person name="Wu J."/>
            <person name="Zhou S."/>
            <person name="Childs K.L."/>
            <person name="Davidson R.M."/>
            <person name="Lin H."/>
            <person name="Quesada-Ocampo L."/>
            <person name="Vaillancourt B."/>
            <person name="Sakai H."/>
            <person name="Lee S.S."/>
            <person name="Kim J."/>
            <person name="Numa H."/>
            <person name="Itoh T."/>
            <person name="Buell C.R."/>
            <person name="Matsumoto T."/>
        </authorList>
    </citation>
    <scope>GENOME REANNOTATION</scope>
    <source>
        <strain>cv. Nipponbare</strain>
    </source>
</reference>
<reference key="6">
    <citation type="journal article" date="2005" name="PLoS Biol.">
        <title>The genomes of Oryza sativa: a history of duplications.</title>
        <authorList>
            <person name="Yu J."/>
            <person name="Wang J."/>
            <person name="Lin W."/>
            <person name="Li S."/>
            <person name="Li H."/>
            <person name="Zhou J."/>
            <person name="Ni P."/>
            <person name="Dong W."/>
            <person name="Hu S."/>
            <person name="Zeng C."/>
            <person name="Zhang J."/>
            <person name="Zhang Y."/>
            <person name="Li R."/>
            <person name="Xu Z."/>
            <person name="Li S."/>
            <person name="Li X."/>
            <person name="Zheng H."/>
            <person name="Cong L."/>
            <person name="Lin L."/>
            <person name="Yin J."/>
            <person name="Geng J."/>
            <person name="Li G."/>
            <person name="Shi J."/>
            <person name="Liu J."/>
            <person name="Lv H."/>
            <person name="Li J."/>
            <person name="Wang J."/>
            <person name="Deng Y."/>
            <person name="Ran L."/>
            <person name="Shi X."/>
            <person name="Wang X."/>
            <person name="Wu Q."/>
            <person name="Li C."/>
            <person name="Ren X."/>
            <person name="Wang J."/>
            <person name="Wang X."/>
            <person name="Li D."/>
            <person name="Liu D."/>
            <person name="Zhang X."/>
            <person name="Ji Z."/>
            <person name="Zhao W."/>
            <person name="Sun Y."/>
            <person name="Zhang Z."/>
            <person name="Bao J."/>
            <person name="Han Y."/>
            <person name="Dong L."/>
            <person name="Ji J."/>
            <person name="Chen P."/>
            <person name="Wu S."/>
            <person name="Liu J."/>
            <person name="Xiao Y."/>
            <person name="Bu D."/>
            <person name="Tan J."/>
            <person name="Yang L."/>
            <person name="Ye C."/>
            <person name="Zhang J."/>
            <person name="Xu J."/>
            <person name="Zhou Y."/>
            <person name="Yu Y."/>
            <person name="Zhang B."/>
            <person name="Zhuang S."/>
            <person name="Wei H."/>
            <person name="Liu B."/>
            <person name="Lei M."/>
            <person name="Yu H."/>
            <person name="Li Y."/>
            <person name="Xu H."/>
            <person name="Wei S."/>
            <person name="He X."/>
            <person name="Fang L."/>
            <person name="Zhang Z."/>
            <person name="Zhang Y."/>
            <person name="Huang X."/>
            <person name="Su Z."/>
            <person name="Tong W."/>
            <person name="Li J."/>
            <person name="Tong Z."/>
            <person name="Li S."/>
            <person name="Ye J."/>
            <person name="Wang L."/>
            <person name="Fang L."/>
            <person name="Lei T."/>
            <person name="Chen C.-S."/>
            <person name="Chen H.-C."/>
            <person name="Xu Z."/>
            <person name="Li H."/>
            <person name="Huang H."/>
            <person name="Zhang F."/>
            <person name="Xu H."/>
            <person name="Li N."/>
            <person name="Zhao C."/>
            <person name="Li S."/>
            <person name="Dong L."/>
            <person name="Huang Y."/>
            <person name="Li L."/>
            <person name="Xi Y."/>
            <person name="Qi Q."/>
            <person name="Li W."/>
            <person name="Zhang B."/>
            <person name="Hu W."/>
            <person name="Zhang Y."/>
            <person name="Tian X."/>
            <person name="Jiao Y."/>
            <person name="Liang X."/>
            <person name="Jin J."/>
            <person name="Gao L."/>
            <person name="Zheng W."/>
            <person name="Hao B."/>
            <person name="Liu S.-M."/>
            <person name="Wang W."/>
            <person name="Yuan L."/>
            <person name="Cao M."/>
            <person name="McDermott J."/>
            <person name="Samudrala R."/>
            <person name="Wang J."/>
            <person name="Wong G.K.-S."/>
            <person name="Yang H."/>
        </authorList>
    </citation>
    <scope>NUCLEOTIDE SEQUENCE [LARGE SCALE GENOMIC DNA]</scope>
    <source>
        <strain>cv. Nipponbare</strain>
    </source>
</reference>
<reference key="7">
    <citation type="journal article" date="2003" name="Science">
        <title>Collection, mapping, and annotation of over 28,000 cDNA clones from japonica rice.</title>
        <authorList>
            <consortium name="The rice full-length cDNA consortium"/>
        </authorList>
    </citation>
    <scope>NUCLEOTIDE SEQUENCE [LARGE SCALE MRNA]</scope>
    <source>
        <strain>cv. Nipponbare</strain>
    </source>
</reference>
<gene>
    <name type="primary">POLD2</name>
    <name type="ordered locus">Os03g0128500</name>
    <name type="ordered locus">LOC_Os03g03650</name>
    <name type="ORF">OJ1528D07.1</name>
    <name evidence="3" type="ORF">OsJ_09265</name>
</gene>